<name>ZNRF1_HUMAN</name>
<comment type="function">
    <text evidence="7 8 9 10 11 14">E3 ubiquitin-protein ligase that plays a role in different processes including cell differentiation, receptor recycling or regulation of inflammation (PubMed:28593998, PubMed:33996800, PubMed:37158982). Mediates the ubiquitination of AKT1 and GLUL, thereby playing a role in neuron cells differentiation. Plays a role in the establishment and maintenance of neuronal transmission and plasticity. Regulates Schwann cells differentiation by mediating ubiquitination of GLUL. Promotes neurodegeneration by mediating 'Lys-48'-linked polyubiquitination and subsequent degradation of AKT1 in axons: degradation of AKT1 prevents AKT1-mediated phosphorylation of GSK3B, leading to GSK3B activation and phosphorylation of DPYSL2/CRMP2 followed by destabilization of microtubule assembly in axons. Ubiquitinates the Na(+)/K(+) ATPase alpha-1 subunit/ATP1A1 and thereby influences its endocytosis and/or degradation (PubMed:22797923). Controls ligand-induced EGFR signaling via mediating receptor ubiquitination and recruitment of the ESCRT machinery (PubMed:33996800). Acts as a negative feedback mechanism controlling TLR3 trafficking by mediating TLR3 'Lys-63'-linked polyubiquitination to reduce type I IFN production (PubMed:37158982). Modulates inflammation by promoting caveolin-1/CAV1 ubiquitination and degradation to regulate TLR4-activated immune response (PubMed:28593998).</text>
</comment>
<comment type="catalytic activity">
    <reaction evidence="7 8 10 11">
        <text>S-ubiquitinyl-[E2 ubiquitin-conjugating enzyme]-L-cysteine + [acceptor protein]-L-lysine = [E2 ubiquitin-conjugating enzyme]-L-cysteine + N(6)-ubiquitinyl-[acceptor protein]-L-lysine.</text>
        <dbReference type="EC" id="2.3.2.27"/>
    </reaction>
</comment>
<comment type="pathway">
    <text>Protein modification; protein ubiquitination.</text>
</comment>
<comment type="subunit">
    <text evidence="2 7 9">Interacts with AKT1, GLUL and TUBB2A (By similarity). Interacts with ZNRF2 (PubMed:22797923). Interacts (via its RING domain) with UBE2N (PubMed:29626159). Interacts (when phosphorylated) with YWHAE (PubMed:22797923).</text>
</comment>
<comment type="interaction">
    <interactant intactId="EBI-2129250">
        <id>Q8ND25</id>
    </interactant>
    <interactant intactId="EBI-743540">
        <id>P51668</id>
        <label>UBE2D1</label>
    </interactant>
    <organismsDiffer>false</organismsDiffer>
    <experiments>9</experiments>
</comment>
<comment type="interaction">
    <interactant intactId="EBI-2129250">
        <id>Q8ND25</id>
    </interactant>
    <interactant intactId="EBI-347677">
        <id>P62837</id>
        <label>UBE2D2</label>
    </interactant>
    <organismsDiffer>false</organismsDiffer>
    <experiments>7</experiments>
</comment>
<comment type="interaction">
    <interactant intactId="EBI-2129250">
        <id>Q8ND25</id>
    </interactant>
    <interactant intactId="EBI-348268">
        <id>P61077</id>
        <label>UBE2D3</label>
    </interactant>
    <organismsDiffer>false</organismsDiffer>
    <experiments>3</experiments>
</comment>
<comment type="interaction">
    <interactant intactId="EBI-2129250">
        <id>Q8ND25</id>
    </interactant>
    <interactant intactId="EBI-745527">
        <id>Q9Y2X8</id>
        <label>UBE2D4</label>
    </interactant>
    <organismsDiffer>false</organismsDiffer>
    <experiments>6</experiments>
</comment>
<comment type="interaction">
    <interactant intactId="EBI-2129250">
        <id>Q8ND25</id>
    </interactant>
    <interactant intactId="EBI-348546">
        <id>P51965</id>
        <label>UBE2E1</label>
    </interactant>
    <organismsDiffer>false</organismsDiffer>
    <experiments>3</experiments>
</comment>
<comment type="interaction">
    <interactant intactId="EBI-2129250">
        <id>Q8ND25</id>
    </interactant>
    <interactant intactId="EBI-1052908">
        <id>P61088</id>
        <label>UBE2N</label>
    </interactant>
    <organismsDiffer>false</organismsDiffer>
    <experiments>6</experiments>
</comment>
<comment type="interaction">
    <interactant intactId="EBI-2129250">
        <id>Q8ND25</id>
    </interactant>
    <interactant intactId="EBI-1050671">
        <id>Q13404</id>
        <label>UBE2V1</label>
    </interactant>
    <organismsDiffer>false</organismsDiffer>
    <experiments>2</experiments>
</comment>
<comment type="interaction">
    <interactant intactId="EBI-2129250">
        <id>Q8ND25</id>
    </interactant>
    <interactant intactId="EBI-1993627">
        <id>O94888</id>
        <label>UBXN7</label>
    </interactant>
    <organismsDiffer>false</organismsDiffer>
    <experiments>5</experiments>
</comment>
<comment type="subcellular location">
    <subcellularLocation>
        <location>Endosome</location>
    </subcellularLocation>
    <subcellularLocation>
        <location>Lysosome</location>
    </subcellularLocation>
    <subcellularLocation>
        <location>Membrane</location>
        <topology>Peripheral membrane protein</topology>
    </subcellularLocation>
    <subcellularLocation>
        <location evidence="13">Cytoplasmic vesicle</location>
        <location evidence="13">Secretory vesicle</location>
        <location evidence="13">Synaptic vesicle membrane</location>
        <topology evidence="13">Peripheral membrane protein</topology>
    </subcellularLocation>
    <text>Associated with synaptic vesicle membranes in neurons.</text>
</comment>
<comment type="alternative products">
    <event type="alternative splicing"/>
    <isoform>
        <id>Q8ND25-1</id>
        <name>1</name>
        <sequence type="displayed"/>
    </isoform>
    <isoform>
        <id>Q8ND25-2</id>
        <name>2</name>
        <sequence type="described" ref="VSP_023088"/>
    </isoform>
</comment>
<comment type="tissue specificity">
    <text evidence="5 6">Expressed primarily in the nervous system, with expression higher in developing brain relative to adult. Expressed at low levels in testis and thymus.</text>
</comment>
<comment type="domain">
    <text evidence="1">The RING-type zinc finger domain is required for E3 ligase activity.</text>
</comment>
<comment type="PTM">
    <text evidence="7">N-myristoylation targets ZNRF1 to intracellular membranes.</text>
</comment>
<comment type="PTM">
    <text evidence="11">Phosphorylated by SRC at Tyr-103; leading to 'Lys-63'-linked ubiquitination of TLR3, lysosomal trafficking and degradation.</text>
</comment>
<protein>
    <recommendedName>
        <fullName>E3 ubiquitin-protein ligase ZNRF1</fullName>
        <ecNumber evidence="7 8 10 11">2.3.2.27</ecNumber>
    </recommendedName>
    <alternativeName>
        <fullName>Nerve injury-induced gene 283 protein</fullName>
    </alternativeName>
    <alternativeName>
        <fullName>RING-type E3 ubiquitin transferase ZNRF1</fullName>
    </alternativeName>
    <alternativeName>
        <fullName>Zinc/RING finger protein 1</fullName>
    </alternativeName>
</protein>
<reference key="1">
    <citation type="journal article" date="2001" name="J. Biol. Chem.">
        <title>Identification of genes induced in peripheral nerve after injury. Expression profiling and novel gene discovery.</title>
        <authorList>
            <person name="Araki T."/>
            <person name="Nagarajan R."/>
            <person name="Milbrandt J."/>
        </authorList>
    </citation>
    <scope>NUCLEOTIDE SEQUENCE [MRNA] (ISOFORM 1)</scope>
    <scope>TISSUE SPECIFICITY</scope>
</reference>
<reference key="2">
    <citation type="journal article" date="2001" name="Genome Res.">
        <title>Towards a catalog of human genes and proteins: sequencing and analysis of 500 novel complete protein coding human cDNAs.</title>
        <authorList>
            <person name="Wiemann S."/>
            <person name="Weil B."/>
            <person name="Wellenreuther R."/>
            <person name="Gassenhuber J."/>
            <person name="Glassl S."/>
            <person name="Ansorge W."/>
            <person name="Boecher M."/>
            <person name="Bloecker H."/>
            <person name="Bauersachs S."/>
            <person name="Blum H."/>
            <person name="Lauber J."/>
            <person name="Duesterhoeft A."/>
            <person name="Beyer A."/>
            <person name="Koehrer K."/>
            <person name="Strack N."/>
            <person name="Mewes H.-W."/>
            <person name="Ottenwaelder B."/>
            <person name="Obermaier B."/>
            <person name="Tampe J."/>
            <person name="Heubner D."/>
            <person name="Wambutt R."/>
            <person name="Korn B."/>
            <person name="Klein M."/>
            <person name="Poustka A."/>
        </authorList>
    </citation>
    <scope>NUCLEOTIDE SEQUENCE [LARGE SCALE MRNA] (ISOFORM 1)</scope>
    <scope>NUCLEOTIDE SEQUENCE [LARGE SCALE MRNA] OF 8-278 (ISOFORM 2)</scope>
    <source>
        <tissue>Testis</tissue>
    </source>
</reference>
<reference key="3">
    <citation type="journal article" date="2004" name="Nature">
        <title>The sequence and analysis of duplication-rich human chromosome 16.</title>
        <authorList>
            <person name="Martin J."/>
            <person name="Han C."/>
            <person name="Gordon L.A."/>
            <person name="Terry A."/>
            <person name="Prabhakar S."/>
            <person name="She X."/>
            <person name="Xie G."/>
            <person name="Hellsten U."/>
            <person name="Chan Y.M."/>
            <person name="Altherr M."/>
            <person name="Couronne O."/>
            <person name="Aerts A."/>
            <person name="Bajorek E."/>
            <person name="Black S."/>
            <person name="Blumer H."/>
            <person name="Branscomb E."/>
            <person name="Brown N.C."/>
            <person name="Bruno W.J."/>
            <person name="Buckingham J.M."/>
            <person name="Callen D.F."/>
            <person name="Campbell C.S."/>
            <person name="Campbell M.L."/>
            <person name="Campbell E.W."/>
            <person name="Caoile C."/>
            <person name="Challacombe J.F."/>
            <person name="Chasteen L.A."/>
            <person name="Chertkov O."/>
            <person name="Chi H.C."/>
            <person name="Christensen M."/>
            <person name="Clark L.M."/>
            <person name="Cohn J.D."/>
            <person name="Denys M."/>
            <person name="Detter J.C."/>
            <person name="Dickson M."/>
            <person name="Dimitrijevic-Bussod M."/>
            <person name="Escobar J."/>
            <person name="Fawcett J.J."/>
            <person name="Flowers D."/>
            <person name="Fotopulos D."/>
            <person name="Glavina T."/>
            <person name="Gomez M."/>
            <person name="Gonzales E."/>
            <person name="Goodstein D."/>
            <person name="Goodwin L.A."/>
            <person name="Grady D.L."/>
            <person name="Grigoriev I."/>
            <person name="Groza M."/>
            <person name="Hammon N."/>
            <person name="Hawkins T."/>
            <person name="Haydu L."/>
            <person name="Hildebrand C.E."/>
            <person name="Huang W."/>
            <person name="Israni S."/>
            <person name="Jett J."/>
            <person name="Jewett P.B."/>
            <person name="Kadner K."/>
            <person name="Kimball H."/>
            <person name="Kobayashi A."/>
            <person name="Krawczyk M.-C."/>
            <person name="Leyba T."/>
            <person name="Longmire J.L."/>
            <person name="Lopez F."/>
            <person name="Lou Y."/>
            <person name="Lowry S."/>
            <person name="Ludeman T."/>
            <person name="Manohar C.F."/>
            <person name="Mark G.A."/>
            <person name="McMurray K.L."/>
            <person name="Meincke L.J."/>
            <person name="Morgan J."/>
            <person name="Moyzis R.K."/>
            <person name="Mundt M.O."/>
            <person name="Munk A.C."/>
            <person name="Nandkeshwar R.D."/>
            <person name="Pitluck S."/>
            <person name="Pollard M."/>
            <person name="Predki P."/>
            <person name="Parson-Quintana B."/>
            <person name="Ramirez L."/>
            <person name="Rash S."/>
            <person name="Retterer J."/>
            <person name="Ricke D.O."/>
            <person name="Robinson D.L."/>
            <person name="Rodriguez A."/>
            <person name="Salamov A."/>
            <person name="Saunders E.H."/>
            <person name="Scott D."/>
            <person name="Shough T."/>
            <person name="Stallings R.L."/>
            <person name="Stalvey M."/>
            <person name="Sutherland R.D."/>
            <person name="Tapia R."/>
            <person name="Tesmer J.G."/>
            <person name="Thayer N."/>
            <person name="Thompson L.S."/>
            <person name="Tice H."/>
            <person name="Torney D.C."/>
            <person name="Tran-Gyamfi M."/>
            <person name="Tsai M."/>
            <person name="Ulanovsky L.E."/>
            <person name="Ustaszewska A."/>
            <person name="Vo N."/>
            <person name="White P.S."/>
            <person name="Williams A.L."/>
            <person name="Wills P.L."/>
            <person name="Wu J.-R."/>
            <person name="Wu K."/>
            <person name="Yang J."/>
            <person name="DeJong P."/>
            <person name="Bruce D."/>
            <person name="Doggett N.A."/>
            <person name="Deaven L."/>
            <person name="Schmutz J."/>
            <person name="Grimwood J."/>
            <person name="Richardson P."/>
            <person name="Rokhsar D.S."/>
            <person name="Eichler E.E."/>
            <person name="Gilna P."/>
            <person name="Lucas S.M."/>
            <person name="Myers R.M."/>
            <person name="Rubin E.M."/>
            <person name="Pennacchio L.A."/>
        </authorList>
    </citation>
    <scope>NUCLEOTIDE SEQUENCE [LARGE SCALE GENOMIC DNA]</scope>
</reference>
<reference key="4">
    <citation type="submission" date="2005-09" db="EMBL/GenBank/DDBJ databases">
        <authorList>
            <person name="Mural R.J."/>
            <person name="Istrail S."/>
            <person name="Sutton G.G."/>
            <person name="Florea L."/>
            <person name="Halpern A.L."/>
            <person name="Mobarry C.M."/>
            <person name="Lippert R."/>
            <person name="Walenz B."/>
            <person name="Shatkay H."/>
            <person name="Dew I."/>
            <person name="Miller J.R."/>
            <person name="Flanigan M.J."/>
            <person name="Edwards N.J."/>
            <person name="Bolanos R."/>
            <person name="Fasulo D."/>
            <person name="Halldorsson B.V."/>
            <person name="Hannenhalli S."/>
            <person name="Turner R."/>
            <person name="Yooseph S."/>
            <person name="Lu F."/>
            <person name="Nusskern D.R."/>
            <person name="Shue B.C."/>
            <person name="Zheng X.H."/>
            <person name="Zhong F."/>
            <person name="Delcher A.L."/>
            <person name="Huson D.H."/>
            <person name="Kravitz S.A."/>
            <person name="Mouchard L."/>
            <person name="Reinert K."/>
            <person name="Remington K.A."/>
            <person name="Clark A.G."/>
            <person name="Waterman M.S."/>
            <person name="Eichler E.E."/>
            <person name="Adams M.D."/>
            <person name="Hunkapiller M.W."/>
            <person name="Myers E.W."/>
            <person name="Venter J.C."/>
        </authorList>
    </citation>
    <scope>NUCLEOTIDE SEQUENCE [LARGE SCALE GENOMIC DNA]</scope>
</reference>
<reference key="5">
    <citation type="journal article" date="2004" name="Genome Res.">
        <title>The status, quality, and expansion of the NIH full-length cDNA project: the Mammalian Gene Collection (MGC).</title>
        <authorList>
            <consortium name="The MGC Project Team"/>
        </authorList>
    </citation>
    <scope>NUCLEOTIDE SEQUENCE [LARGE SCALE MRNA] (ISOFORM 1)</scope>
    <source>
        <tissue>Lung</tissue>
    </source>
</reference>
<reference key="6">
    <citation type="journal article" date="2003" name="J. Neurosci.">
        <title>ZNRF proteins constitute a family of presynaptic E3 ubiquitin ligases.</title>
        <authorList>
            <person name="Araki T."/>
            <person name="Milbrandt J."/>
        </authorList>
    </citation>
    <scope>FUNCTION</scope>
    <scope>TISSUE SPECIFICITY</scope>
    <scope>MYRISTOYLATION AT GLY-2</scope>
    <scope>MUTAGENESIS OF CYS-184</scope>
</reference>
<reference key="7">
    <citation type="journal article" date="2009" name="Sci. Signal.">
        <title>Quantitative phosphoproteomic analysis of T cell receptor signaling reveals system-wide modulation of protein-protein interactions.</title>
        <authorList>
            <person name="Mayya V."/>
            <person name="Lundgren D.H."/>
            <person name="Hwang S.-I."/>
            <person name="Rezaul K."/>
            <person name="Wu L."/>
            <person name="Eng J.K."/>
            <person name="Rodionov V."/>
            <person name="Han D.K."/>
        </authorList>
    </citation>
    <scope>PHOSPHORYLATION [LARGE SCALE ANALYSIS] AT SER-52 AND SER-53</scope>
    <scope>IDENTIFICATION BY MASS SPECTROMETRY [LARGE SCALE ANALYSIS]</scope>
    <source>
        <tissue>Leukemic T-cell</tissue>
    </source>
</reference>
<reference key="8">
    <citation type="journal article" date="2012" name="J. Cell Sci.">
        <title>ZNRF2 is released from membranes by growth factors and, together with ZNRF1, regulates the Na+/K+ATPase.</title>
        <authorList>
            <person name="Hoxhaj G."/>
            <person name="Najafov A."/>
            <person name="Toth R."/>
            <person name="Campbell D.G."/>
            <person name="Prescott A.R."/>
            <person name="MacKintosh C."/>
        </authorList>
    </citation>
    <scope>FUNCTION</scope>
    <scope>INTERACTION WITH ZNRF2</scope>
    <scope>MYRISTOYLATION AT GLY-2</scope>
    <scope>SUBCELLULAR LOCATION</scope>
    <scope>MUTAGENESIS OF GLY-2; SER-19; SER-82; CYS-145 AND CYS-148</scope>
    <scope>CATALYTIC ACTIVITY</scope>
    <scope>INTERACTION WITH YWHAE</scope>
    <scope>PHOSPHORYLATION AT SER-50</scope>
</reference>
<reference key="9">
    <citation type="journal article" date="2013" name="J. Proteome Res.">
        <title>Toward a comprehensive characterization of a human cancer cell phosphoproteome.</title>
        <authorList>
            <person name="Zhou H."/>
            <person name="Di Palma S."/>
            <person name="Preisinger C."/>
            <person name="Peng M."/>
            <person name="Polat A.N."/>
            <person name="Heck A.J."/>
            <person name="Mohammed S."/>
        </authorList>
    </citation>
    <scope>PHOSPHORYLATION [LARGE SCALE ANALYSIS] AT SER-123</scope>
    <scope>IDENTIFICATION BY MASS SPECTROMETRY [LARGE SCALE ANALYSIS]</scope>
    <source>
        <tissue>Cervix carcinoma</tissue>
        <tissue>Erythroleukemia</tissue>
    </source>
</reference>
<reference key="10">
    <citation type="journal article" date="2017" name="Nat. Commun.">
        <title>The ubiquitin ligase ZNRF1 promotes caveolin-1 ubiquitination and degradation to modulate inflammation.</title>
        <authorList>
            <person name="Lee C.Y."/>
            <person name="Lai T.Y."/>
            <person name="Tsai M.K."/>
            <person name="Chang Y.C."/>
            <person name="Ho Y.H."/>
            <person name="Yu I.S."/>
            <person name="Yeh T.W."/>
            <person name="Chou C.C."/>
            <person name="Lin Y.S."/>
            <person name="Lawrence T."/>
            <person name="Hsu L.C."/>
        </authorList>
    </citation>
    <scope>FUNCTION</scope>
    <scope>MUTAGENESIS OF CYS-184</scope>
    <scope>CATALYTIC ACTIVITY</scope>
</reference>
<reference key="11">
    <citation type="journal article" date="2021" name="Front. Cell Dev. Biol.">
        <title>ZNRF1 Mediates Epidermal Growth Factor Receptor Ubiquitination to Control Receptor Lysosomal Trafficking and Degradation.</title>
        <authorList>
            <person name="Shen C.H."/>
            <person name="Chou C.C."/>
            <person name="Lai T.Y."/>
            <person name="Hsu J.E."/>
            <person name="Lin Y.S."/>
            <person name="Liu H.Y."/>
            <person name="Chen Y.K."/>
            <person name="Ho I.L."/>
            <person name="Hsu P.H."/>
            <person name="Chuang T.H."/>
            <person name="Lee C.Y."/>
            <person name="Hsu L.C."/>
        </authorList>
    </citation>
    <scope>FUNCTION</scope>
    <scope>CATALYTIC ACTIVITY</scope>
    <scope>MUTAGENESIS OF CYS-184</scope>
</reference>
<reference key="12">
    <citation type="journal article" date="2023" name="J. Exp. Med.">
        <title>The Src-ZNRF1 axis controls TLR3 trafficking and interferon responses to limit lung barrier damage.</title>
        <authorList>
            <person name="Lin Y.S."/>
            <person name="Chang Y.C."/>
            <person name="Chao T.L."/>
            <person name="Tsai Y.M."/>
            <person name="Jhuang S.J."/>
            <person name="Ho Y.H."/>
            <person name="Lai T.Y."/>
            <person name="Liu Y.L."/>
            <person name="Chen C.Y."/>
            <person name="Tsai C.Y."/>
            <person name="Hsueh Y.P."/>
            <person name="Chang S.Y."/>
            <person name="Chuang T.H."/>
            <person name="Lee C.Y."/>
            <person name="Hsu L.C."/>
        </authorList>
    </citation>
    <scope>FUNCTION</scope>
    <scope>CATALYTIC ACTIVITY</scope>
    <scope>MUTAGENESIS OF CYS-184</scope>
    <scope>PHOSPHORYLATION AT TYR-103</scope>
</reference>
<reference evidence="15" key="13">
    <citation type="journal article" date="2018" name="Biochem. J.">
        <title>Structural insights into the nanomolar affinity of RING E3 ligase ZNRF1 for Ube2N and its functional implications.</title>
        <authorList>
            <person name="Behera A.P."/>
            <person name="Naskar P."/>
            <person name="Agarwal S."/>
            <person name="Banka P.A."/>
            <person name="Poddar A."/>
            <person name="Datta A.B."/>
        </authorList>
    </citation>
    <scope>X-RAY CRYSTALLOGRAPHY (1.47 ANGSTROMS) OF 139-227</scope>
    <scope>FUNCTION</scope>
    <scope>INTERACTION WITH UBE2N</scope>
    <scope>MUTAGENESIS OF GLU-183</scope>
</reference>
<evidence type="ECO:0000250" key="1"/>
<evidence type="ECO:0000250" key="2">
    <source>
        <dbReference type="UniProtKB" id="Q91V17"/>
    </source>
</evidence>
<evidence type="ECO:0000255" key="3">
    <source>
        <dbReference type="PROSITE-ProRule" id="PRU00175"/>
    </source>
</evidence>
<evidence type="ECO:0000256" key="4">
    <source>
        <dbReference type="SAM" id="MobiDB-lite"/>
    </source>
</evidence>
<evidence type="ECO:0000269" key="5">
    <source>
    </source>
</evidence>
<evidence type="ECO:0000269" key="6">
    <source>
    </source>
</evidence>
<evidence type="ECO:0000269" key="7">
    <source>
    </source>
</evidence>
<evidence type="ECO:0000269" key="8">
    <source>
    </source>
</evidence>
<evidence type="ECO:0000269" key="9">
    <source>
    </source>
</evidence>
<evidence type="ECO:0000269" key="10">
    <source>
    </source>
</evidence>
<evidence type="ECO:0000269" key="11">
    <source>
    </source>
</evidence>
<evidence type="ECO:0000303" key="12">
    <source>
    </source>
</evidence>
<evidence type="ECO:0000305" key="13"/>
<evidence type="ECO:0000305" key="14">
    <source>
    </source>
</evidence>
<evidence type="ECO:0007744" key="15">
    <source>
        <dbReference type="PDB" id="5YWR"/>
    </source>
</evidence>
<evidence type="ECO:0007744" key="16">
    <source>
    </source>
</evidence>
<evidence type="ECO:0007744" key="17">
    <source>
    </source>
</evidence>
<evidence type="ECO:0007829" key="18">
    <source>
        <dbReference type="PDB" id="5YWR"/>
    </source>
</evidence>
<keyword id="KW-0002">3D-structure</keyword>
<keyword id="KW-0025">Alternative splicing</keyword>
<keyword id="KW-0968">Cytoplasmic vesicle</keyword>
<keyword id="KW-0967">Endosome</keyword>
<keyword id="KW-0449">Lipoprotein</keyword>
<keyword id="KW-0458">Lysosome</keyword>
<keyword id="KW-0472">Membrane</keyword>
<keyword id="KW-0479">Metal-binding</keyword>
<keyword id="KW-0519">Myristate</keyword>
<keyword id="KW-0597">Phosphoprotein</keyword>
<keyword id="KW-1267">Proteomics identification</keyword>
<keyword id="KW-1185">Reference proteome</keyword>
<keyword id="KW-0770">Synapse</keyword>
<keyword id="KW-0808">Transferase</keyword>
<keyword id="KW-0832">Ubl conjugation</keyword>
<keyword id="KW-0833">Ubl conjugation pathway</keyword>
<keyword id="KW-0862">Zinc</keyword>
<keyword id="KW-0863">Zinc-finger</keyword>
<accession>Q8ND25</accession>
<accession>D3DUJ9</accession>
<accession>Q9H083</accession>
<proteinExistence type="evidence at protein level"/>
<sequence>MGGKQSTAARSRGPFPGVSTDDSAVPPPGGAPHFGHYRTGGGAMGLRSRSVSSVAGMGMDPSTAGGVPFGLYTPASRGTGDSERAPGGGGSASDSTYAHGNGYQETGGGHHRDGMLYLGSRASLADALPLHIAPRWFSSHSGFKCPICSKSVASDEMEMHFIMCLSKPRLSYNDDVLTKDAGECVICLEELLQGDTIARLPCLCIYHKSCIDSWFEVNRSCPEHPAD</sequence>
<gene>
    <name type="primary">ZNRF1</name>
    <name type="synonym">NIN283</name>
</gene>
<feature type="initiator methionine" description="Removed" evidence="13">
    <location>
        <position position="1"/>
    </location>
</feature>
<feature type="chain" id="PRO_0000277799" description="E3 ubiquitin-protein ligase ZNRF1">
    <location>
        <begin position="2"/>
        <end position="227"/>
    </location>
</feature>
<feature type="zinc finger region" description="RING-type; atypical" evidence="3">
    <location>
        <begin position="184"/>
        <end position="225"/>
    </location>
</feature>
<feature type="region of interest" description="Disordered" evidence="4">
    <location>
        <begin position="1"/>
        <end position="42"/>
    </location>
</feature>
<feature type="region of interest" description="Required for endosomal and lysosomal localization and myristoylation">
    <location>
        <begin position="2"/>
        <end position="10"/>
    </location>
</feature>
<feature type="region of interest" description="Disordered" evidence="4">
    <location>
        <begin position="68"/>
        <end position="105"/>
    </location>
</feature>
<feature type="modified residue" description="Phosphoserine" evidence="7">
    <location>
        <position position="50"/>
    </location>
</feature>
<feature type="modified residue" description="Phosphoserine" evidence="16">
    <location>
        <position position="52"/>
    </location>
</feature>
<feature type="modified residue" description="Phosphoserine" evidence="16">
    <location>
        <position position="53"/>
    </location>
</feature>
<feature type="modified residue" description="Phosphotyrosine; by SRC" evidence="11">
    <location>
        <position position="103"/>
    </location>
</feature>
<feature type="modified residue" description="Phosphoserine" evidence="17">
    <location>
        <position position="123"/>
    </location>
</feature>
<feature type="lipid moiety-binding region" description="N-myristoyl glycine" evidence="7 14">
    <location>
        <position position="2"/>
    </location>
</feature>
<feature type="splice variant" id="VSP_023088" description="In isoform 2." evidence="12">
    <original>N</original>
    <variation>NGRIQRSLRGAQPEKTWLSGRTLQEQPWRTECSWAPMAQMQSYPHCPVENRE</variation>
    <location>
        <position position="173"/>
    </location>
</feature>
<feature type="mutagenesis site" description="Greatly reduced binding to ATP1A1." evidence="7">
    <original>G</original>
    <variation>A</variation>
    <location>
        <position position="2"/>
    </location>
</feature>
<feature type="mutagenesis site" description="Partial loss of binding to 14-3-3.">
    <original>S</original>
    <variation>A</variation>
    <location>
        <position position="19"/>
    </location>
</feature>
<feature type="mutagenesis site" description="Partial loss of binding to 14-3-3.">
    <original>S</original>
    <variation>A</variation>
    <location>
        <position position="82"/>
    </location>
</feature>
<feature type="mutagenesis site" description="Complete loss of binding to ATP1A1; when associated with A-148." evidence="7">
    <original>C</original>
    <variation>A</variation>
    <location>
        <position position="145"/>
    </location>
</feature>
<feature type="mutagenesis site" description="Complete loss of binding to ATP1A1; when associated with A-145." evidence="7">
    <original>C</original>
    <variation>A</variation>
    <location>
        <position position="148"/>
    </location>
</feature>
<feature type="mutagenesis site" description="About 10-fold decreased binding to UBE2N." evidence="9">
    <original>E</original>
    <variation>A</variation>
    <location>
        <position position="183"/>
    </location>
</feature>
<feature type="mutagenesis site" description="Loss of E3 activity." evidence="6 8 10 11">
    <original>C</original>
    <variation>A</variation>
    <location>
        <position position="184"/>
    </location>
</feature>
<feature type="turn" evidence="18">
    <location>
        <begin position="146"/>
        <end position="148"/>
    </location>
</feature>
<feature type="helix" evidence="18">
    <location>
        <begin position="154"/>
        <end position="156"/>
    </location>
</feature>
<feature type="helix" evidence="18">
    <location>
        <begin position="157"/>
        <end position="164"/>
    </location>
</feature>
<feature type="strand" evidence="18">
    <location>
        <begin position="173"/>
        <end position="176"/>
    </location>
</feature>
<feature type="turn" evidence="18">
    <location>
        <begin position="185"/>
        <end position="187"/>
    </location>
</feature>
<feature type="strand" evidence="18">
    <location>
        <begin position="196"/>
        <end position="199"/>
    </location>
</feature>
<feature type="strand" evidence="18">
    <location>
        <begin position="205"/>
        <end position="207"/>
    </location>
</feature>
<feature type="helix" evidence="18">
    <location>
        <begin position="208"/>
        <end position="215"/>
    </location>
</feature>
<dbReference type="EC" id="2.3.2.27" evidence="7 8 10 11"/>
<dbReference type="EMBL" id="AF378524">
    <property type="protein sequence ID" value="AAK69753.1"/>
    <property type="molecule type" value="mRNA"/>
</dbReference>
<dbReference type="EMBL" id="AL136903">
    <property type="protein sequence ID" value="CAB66837.1"/>
    <property type="molecule type" value="mRNA"/>
</dbReference>
<dbReference type="EMBL" id="AL834440">
    <property type="protein sequence ID" value="CAD39100.1"/>
    <property type="molecule type" value="mRNA"/>
</dbReference>
<dbReference type="EMBL" id="AC092383">
    <property type="status" value="NOT_ANNOTATED_CDS"/>
    <property type="molecule type" value="Genomic_DNA"/>
</dbReference>
<dbReference type="EMBL" id="AC099508">
    <property type="status" value="NOT_ANNOTATED_CDS"/>
    <property type="molecule type" value="Genomic_DNA"/>
</dbReference>
<dbReference type="EMBL" id="CH471114">
    <property type="protein sequence ID" value="EAW95668.1"/>
    <property type="molecule type" value="Genomic_DNA"/>
</dbReference>
<dbReference type="EMBL" id="CH471114">
    <property type="protein sequence ID" value="EAW95670.1"/>
    <property type="molecule type" value="Genomic_DNA"/>
</dbReference>
<dbReference type="EMBL" id="CH471114">
    <property type="protein sequence ID" value="EAW95671.1"/>
    <property type="molecule type" value="Genomic_DNA"/>
</dbReference>
<dbReference type="EMBL" id="BC007235">
    <property type="protein sequence ID" value="AAH07235.1"/>
    <property type="molecule type" value="mRNA"/>
</dbReference>
<dbReference type="CCDS" id="CCDS10912.1">
    <molecule id="Q8ND25-1"/>
</dbReference>
<dbReference type="RefSeq" id="NP_115644.1">
    <molecule id="Q8ND25-1"/>
    <property type="nucleotide sequence ID" value="NM_032268.5"/>
</dbReference>
<dbReference type="RefSeq" id="XP_016879282.1">
    <molecule id="Q8ND25-1"/>
    <property type="nucleotide sequence ID" value="XM_017023793.2"/>
</dbReference>
<dbReference type="RefSeq" id="XP_054170185.1">
    <molecule id="Q8ND25-1"/>
    <property type="nucleotide sequence ID" value="XM_054314210.1"/>
</dbReference>
<dbReference type="PDB" id="5YWR">
    <property type="method" value="X-ray"/>
    <property type="resolution" value="1.47 A"/>
    <property type="chains" value="B=139-227"/>
</dbReference>
<dbReference type="PDBsum" id="5YWR"/>
<dbReference type="SMR" id="Q8ND25"/>
<dbReference type="BioGRID" id="124371">
    <property type="interactions" value="36"/>
</dbReference>
<dbReference type="FunCoup" id="Q8ND25">
    <property type="interactions" value="1737"/>
</dbReference>
<dbReference type="IntAct" id="Q8ND25">
    <property type="interactions" value="22"/>
</dbReference>
<dbReference type="STRING" id="9606.ENSP00000335091"/>
<dbReference type="iPTMnet" id="Q8ND25"/>
<dbReference type="PhosphoSitePlus" id="Q8ND25"/>
<dbReference type="BioMuta" id="ZNRF1"/>
<dbReference type="DMDM" id="126253846"/>
<dbReference type="jPOST" id="Q8ND25"/>
<dbReference type="MassIVE" id="Q8ND25"/>
<dbReference type="PaxDb" id="9606-ENSP00000335091"/>
<dbReference type="PeptideAtlas" id="Q8ND25"/>
<dbReference type="ProteomicsDB" id="72976">
    <molecule id="Q8ND25-1"/>
</dbReference>
<dbReference type="ProteomicsDB" id="72977">
    <molecule id="Q8ND25-2"/>
</dbReference>
<dbReference type="Pumba" id="Q8ND25"/>
<dbReference type="Antibodypedia" id="30290">
    <property type="antibodies" value="161 antibodies from 26 providers"/>
</dbReference>
<dbReference type="DNASU" id="84937"/>
<dbReference type="Ensembl" id="ENST00000320619.10">
    <molecule id="Q8ND25-2"/>
    <property type="protein sequence ID" value="ENSP00000323362.6"/>
    <property type="gene ID" value="ENSG00000186187.12"/>
</dbReference>
<dbReference type="Ensembl" id="ENST00000335325.9">
    <molecule id="Q8ND25-1"/>
    <property type="protein sequence ID" value="ENSP00000335091.4"/>
    <property type="gene ID" value="ENSG00000186187.12"/>
</dbReference>
<dbReference type="Ensembl" id="ENST00000567962.5">
    <molecule id="Q8ND25-1"/>
    <property type="protein sequence ID" value="ENSP00000455601.1"/>
    <property type="gene ID" value="ENSG00000186187.12"/>
</dbReference>
<dbReference type="GeneID" id="84937"/>
<dbReference type="KEGG" id="hsa:84937"/>
<dbReference type="MANE-Select" id="ENST00000335325.9">
    <property type="protein sequence ID" value="ENSP00000335091.4"/>
    <property type="RefSeq nucleotide sequence ID" value="NM_032268.5"/>
    <property type="RefSeq protein sequence ID" value="NP_115644.1"/>
</dbReference>
<dbReference type="UCSC" id="uc002fdk.4">
    <molecule id="Q8ND25-1"/>
    <property type="organism name" value="human"/>
</dbReference>
<dbReference type="AGR" id="HGNC:18452"/>
<dbReference type="CTD" id="84937"/>
<dbReference type="DisGeNET" id="84937"/>
<dbReference type="GeneCards" id="ZNRF1"/>
<dbReference type="HGNC" id="HGNC:18452">
    <property type="gene designation" value="ZNRF1"/>
</dbReference>
<dbReference type="HPA" id="ENSG00000186187">
    <property type="expression patterns" value="Low tissue specificity"/>
</dbReference>
<dbReference type="MIM" id="612060">
    <property type="type" value="gene"/>
</dbReference>
<dbReference type="neXtProt" id="NX_Q8ND25"/>
<dbReference type="OpenTargets" id="ENSG00000186187"/>
<dbReference type="PharmGKB" id="PA134938288"/>
<dbReference type="VEuPathDB" id="HostDB:ENSG00000186187"/>
<dbReference type="eggNOG" id="KOG0801">
    <property type="taxonomic scope" value="Eukaryota"/>
</dbReference>
<dbReference type="GeneTree" id="ENSGT00940000159278"/>
<dbReference type="HOGENOM" id="CLU_062700_0_1_1"/>
<dbReference type="InParanoid" id="Q8ND25"/>
<dbReference type="OMA" id="TPYAHGN"/>
<dbReference type="OrthoDB" id="10057496at2759"/>
<dbReference type="PAN-GO" id="Q8ND25">
    <property type="GO annotations" value="6 GO annotations based on evolutionary models"/>
</dbReference>
<dbReference type="PhylomeDB" id="Q8ND25"/>
<dbReference type="TreeFam" id="TF317681"/>
<dbReference type="BRENDA" id="2.3.2.27">
    <property type="organism ID" value="2681"/>
</dbReference>
<dbReference type="PathwayCommons" id="Q8ND25"/>
<dbReference type="Reactome" id="R-HSA-983168">
    <property type="pathway name" value="Antigen processing: Ubiquitination &amp; Proteasome degradation"/>
</dbReference>
<dbReference type="SignaLink" id="Q8ND25"/>
<dbReference type="SIGNOR" id="Q8ND25"/>
<dbReference type="UniPathway" id="UPA00143"/>
<dbReference type="BioGRID-ORCS" id="84937">
    <property type="hits" value="11 hits in 1198 CRISPR screens"/>
</dbReference>
<dbReference type="ChiTaRS" id="ZNRF1">
    <property type="organism name" value="human"/>
</dbReference>
<dbReference type="GeneWiki" id="ZNRF1"/>
<dbReference type="GenomeRNAi" id="84937"/>
<dbReference type="Pharos" id="Q8ND25">
    <property type="development level" value="Tbio"/>
</dbReference>
<dbReference type="PRO" id="PR:Q8ND25"/>
<dbReference type="Proteomes" id="UP000005640">
    <property type="component" value="Chromosome 16"/>
</dbReference>
<dbReference type="RNAct" id="Q8ND25">
    <property type="molecule type" value="protein"/>
</dbReference>
<dbReference type="Bgee" id="ENSG00000186187">
    <property type="expression patterns" value="Expressed in lower esophagus mucosa and 187 other cell types or tissues"/>
</dbReference>
<dbReference type="ExpressionAtlas" id="Q8ND25">
    <property type="expression patterns" value="baseline and differential"/>
</dbReference>
<dbReference type="GO" id="GO:0005737">
    <property type="term" value="C:cytoplasm"/>
    <property type="evidence" value="ECO:0000314"/>
    <property type="project" value="FlyBase"/>
</dbReference>
<dbReference type="GO" id="GO:0005829">
    <property type="term" value="C:cytosol"/>
    <property type="evidence" value="ECO:0000314"/>
    <property type="project" value="MGI"/>
</dbReference>
<dbReference type="GO" id="GO:0005768">
    <property type="term" value="C:endosome"/>
    <property type="evidence" value="ECO:0000314"/>
    <property type="project" value="LIFEdb"/>
</dbReference>
<dbReference type="GO" id="GO:0043231">
    <property type="term" value="C:intracellular membrane-bounded organelle"/>
    <property type="evidence" value="ECO:0000314"/>
    <property type="project" value="HPA"/>
</dbReference>
<dbReference type="GO" id="GO:0005764">
    <property type="term" value="C:lysosome"/>
    <property type="evidence" value="ECO:0007669"/>
    <property type="project" value="UniProtKB-SubCell"/>
</dbReference>
<dbReference type="GO" id="GO:0016020">
    <property type="term" value="C:membrane"/>
    <property type="evidence" value="ECO:0000314"/>
    <property type="project" value="MGI"/>
</dbReference>
<dbReference type="GO" id="GO:0005886">
    <property type="term" value="C:plasma membrane"/>
    <property type="evidence" value="ECO:0000305"/>
    <property type="project" value="UniProt"/>
</dbReference>
<dbReference type="GO" id="GO:0030672">
    <property type="term" value="C:synaptic vesicle membrane"/>
    <property type="evidence" value="ECO:0007669"/>
    <property type="project" value="UniProtKB-SubCell"/>
</dbReference>
<dbReference type="GO" id="GO:0061630">
    <property type="term" value="F:ubiquitin protein ligase activity"/>
    <property type="evidence" value="ECO:0000314"/>
    <property type="project" value="MGI"/>
</dbReference>
<dbReference type="GO" id="GO:0004842">
    <property type="term" value="F:ubiquitin-protein transferase activity"/>
    <property type="evidence" value="ECO:0000250"/>
    <property type="project" value="UniProtKB"/>
</dbReference>
<dbReference type="GO" id="GO:0008270">
    <property type="term" value="F:zinc ion binding"/>
    <property type="evidence" value="ECO:0007669"/>
    <property type="project" value="UniProtKB-KW"/>
</dbReference>
<dbReference type="GO" id="GO:0160177">
    <property type="term" value="P:positive regulation of autophagosome-lysosome fusion"/>
    <property type="evidence" value="ECO:0000316"/>
    <property type="project" value="FlyBase"/>
</dbReference>
<dbReference type="GO" id="GO:0034145">
    <property type="term" value="P:positive regulation of toll-like receptor 4 signaling pathway"/>
    <property type="evidence" value="ECO:0000314"/>
    <property type="project" value="UniProt"/>
</dbReference>
<dbReference type="GO" id="GO:0043161">
    <property type="term" value="P:proteasome-mediated ubiquitin-dependent protein catabolic process"/>
    <property type="evidence" value="ECO:0000250"/>
    <property type="project" value="UniProtKB"/>
</dbReference>
<dbReference type="GO" id="GO:0070936">
    <property type="term" value="P:protein K48-linked ubiquitination"/>
    <property type="evidence" value="ECO:0000250"/>
    <property type="project" value="UniProtKB"/>
</dbReference>
<dbReference type="CDD" id="cd16695">
    <property type="entry name" value="mRING-CH-C4HC2H_ZNRF2"/>
    <property type="match status" value="1"/>
</dbReference>
<dbReference type="FunFam" id="3.30.40.10:FF:000235">
    <property type="entry name" value="E3 ubiquitin-protein ligase ZNRF1"/>
    <property type="match status" value="1"/>
</dbReference>
<dbReference type="Gene3D" id="3.30.40.10">
    <property type="entry name" value="Zinc/RING finger domain, C3HC4 (zinc finger)"/>
    <property type="match status" value="1"/>
</dbReference>
<dbReference type="InterPro" id="IPR001841">
    <property type="entry name" value="Znf_RING"/>
</dbReference>
<dbReference type="InterPro" id="IPR013083">
    <property type="entry name" value="Znf_RING/FYVE/PHD"/>
</dbReference>
<dbReference type="InterPro" id="IPR051878">
    <property type="entry name" value="ZNRF_ubiq-protein_ligase"/>
</dbReference>
<dbReference type="PANTHER" id="PTHR46661:SF2">
    <property type="entry name" value="E3 UBIQUITIN-PROTEIN LIGASE ZNRF1"/>
    <property type="match status" value="1"/>
</dbReference>
<dbReference type="PANTHER" id="PTHR46661">
    <property type="entry name" value="E3 UBIQUITIN-PROTEIN LIGASE ZNRF1-LIKE PROTEIN"/>
    <property type="match status" value="1"/>
</dbReference>
<dbReference type="Pfam" id="PF13639">
    <property type="entry name" value="zf-RING_2"/>
    <property type="match status" value="1"/>
</dbReference>
<dbReference type="SMART" id="SM00184">
    <property type="entry name" value="RING"/>
    <property type="match status" value="1"/>
</dbReference>
<dbReference type="SUPFAM" id="SSF57850">
    <property type="entry name" value="RING/U-box"/>
    <property type="match status" value="1"/>
</dbReference>
<dbReference type="PROSITE" id="PS50089">
    <property type="entry name" value="ZF_RING_2"/>
    <property type="match status" value="1"/>
</dbReference>
<organism>
    <name type="scientific">Homo sapiens</name>
    <name type="common">Human</name>
    <dbReference type="NCBI Taxonomy" id="9606"/>
    <lineage>
        <taxon>Eukaryota</taxon>
        <taxon>Metazoa</taxon>
        <taxon>Chordata</taxon>
        <taxon>Craniata</taxon>
        <taxon>Vertebrata</taxon>
        <taxon>Euteleostomi</taxon>
        <taxon>Mammalia</taxon>
        <taxon>Eutheria</taxon>
        <taxon>Euarchontoglires</taxon>
        <taxon>Primates</taxon>
        <taxon>Haplorrhini</taxon>
        <taxon>Catarrhini</taxon>
        <taxon>Hominidae</taxon>
        <taxon>Homo</taxon>
    </lineage>
</organism>